<protein>
    <recommendedName>
        <fullName evidence="1">ATP phosphoribosyltransferase</fullName>
        <shortName evidence="1">ATP-PRT</shortName>
        <shortName evidence="1">ATP-PRTase</shortName>
        <ecNumber evidence="1">2.4.2.17</ecNumber>
    </recommendedName>
</protein>
<gene>
    <name evidence="1" type="primary">hisG</name>
    <name type="ordered locus">Hlac_2637</name>
</gene>
<evidence type="ECO:0000255" key="1">
    <source>
        <dbReference type="HAMAP-Rule" id="MF_00079"/>
    </source>
</evidence>
<proteinExistence type="inferred from homology"/>
<dbReference type="EC" id="2.4.2.17" evidence="1"/>
<dbReference type="EMBL" id="CP001365">
    <property type="protein sequence ID" value="ACM58208.1"/>
    <property type="molecule type" value="Genomic_DNA"/>
</dbReference>
<dbReference type="RefSeq" id="WP_015911318.1">
    <property type="nucleotide sequence ID" value="NC_012029.1"/>
</dbReference>
<dbReference type="SMR" id="B9LU14"/>
<dbReference type="GeneID" id="7400842"/>
<dbReference type="KEGG" id="hla:Hlac_2637"/>
<dbReference type="eggNOG" id="arCOG02208">
    <property type="taxonomic scope" value="Archaea"/>
</dbReference>
<dbReference type="HOGENOM" id="CLU_038115_1_1_2"/>
<dbReference type="UniPathway" id="UPA00031">
    <property type="reaction ID" value="UER00006"/>
</dbReference>
<dbReference type="Proteomes" id="UP000000740">
    <property type="component" value="Chromosome 1"/>
</dbReference>
<dbReference type="GO" id="GO:0005737">
    <property type="term" value="C:cytoplasm"/>
    <property type="evidence" value="ECO:0007669"/>
    <property type="project" value="UniProtKB-SubCell"/>
</dbReference>
<dbReference type="GO" id="GO:0005524">
    <property type="term" value="F:ATP binding"/>
    <property type="evidence" value="ECO:0007669"/>
    <property type="project" value="UniProtKB-KW"/>
</dbReference>
<dbReference type="GO" id="GO:0003879">
    <property type="term" value="F:ATP phosphoribosyltransferase activity"/>
    <property type="evidence" value="ECO:0007669"/>
    <property type="project" value="UniProtKB-UniRule"/>
</dbReference>
<dbReference type="GO" id="GO:0000287">
    <property type="term" value="F:magnesium ion binding"/>
    <property type="evidence" value="ECO:0007669"/>
    <property type="project" value="UniProtKB-UniRule"/>
</dbReference>
<dbReference type="GO" id="GO:0000105">
    <property type="term" value="P:L-histidine biosynthetic process"/>
    <property type="evidence" value="ECO:0007669"/>
    <property type="project" value="UniProtKB-UniRule"/>
</dbReference>
<dbReference type="FunFam" id="3.30.70.120:FF:000002">
    <property type="entry name" value="ATP phosphoribosyltransferase"/>
    <property type="match status" value="1"/>
</dbReference>
<dbReference type="Gene3D" id="3.30.70.120">
    <property type="match status" value="1"/>
</dbReference>
<dbReference type="Gene3D" id="3.40.190.10">
    <property type="entry name" value="Periplasmic binding protein-like II"/>
    <property type="match status" value="2"/>
</dbReference>
<dbReference type="HAMAP" id="MF_00079">
    <property type="entry name" value="HisG_Long"/>
    <property type="match status" value="1"/>
</dbReference>
<dbReference type="InterPro" id="IPR020621">
    <property type="entry name" value="ATP-PRT_HisG_long"/>
</dbReference>
<dbReference type="InterPro" id="IPR013820">
    <property type="entry name" value="ATP_PRibTrfase_cat"/>
</dbReference>
<dbReference type="InterPro" id="IPR018198">
    <property type="entry name" value="ATP_PRibTrfase_CS"/>
</dbReference>
<dbReference type="InterPro" id="IPR001348">
    <property type="entry name" value="ATP_PRibTrfase_HisG"/>
</dbReference>
<dbReference type="InterPro" id="IPR013115">
    <property type="entry name" value="HisG_C"/>
</dbReference>
<dbReference type="InterPro" id="IPR011322">
    <property type="entry name" value="N-reg_PII-like_a/b"/>
</dbReference>
<dbReference type="InterPro" id="IPR015867">
    <property type="entry name" value="N-reg_PII/ATP_PRibTrfase_C"/>
</dbReference>
<dbReference type="NCBIfam" id="TIGR00070">
    <property type="entry name" value="hisG"/>
    <property type="match status" value="1"/>
</dbReference>
<dbReference type="NCBIfam" id="TIGR03455">
    <property type="entry name" value="HisG_C-term"/>
    <property type="match status" value="1"/>
</dbReference>
<dbReference type="PANTHER" id="PTHR21403:SF10">
    <property type="entry name" value="ATP PHOSPHORIBOSYLTRANSFERASE"/>
    <property type="match status" value="1"/>
</dbReference>
<dbReference type="PANTHER" id="PTHR21403">
    <property type="entry name" value="ATP PHOSPHORIBOSYLTRANSFERASE ATP-PRTASE"/>
    <property type="match status" value="1"/>
</dbReference>
<dbReference type="Pfam" id="PF01634">
    <property type="entry name" value="HisG"/>
    <property type="match status" value="1"/>
</dbReference>
<dbReference type="Pfam" id="PF08029">
    <property type="entry name" value="HisG_C"/>
    <property type="match status" value="1"/>
</dbReference>
<dbReference type="SUPFAM" id="SSF54913">
    <property type="entry name" value="GlnB-like"/>
    <property type="match status" value="1"/>
</dbReference>
<dbReference type="SUPFAM" id="SSF53850">
    <property type="entry name" value="Periplasmic binding protein-like II"/>
    <property type="match status" value="1"/>
</dbReference>
<dbReference type="PROSITE" id="PS01316">
    <property type="entry name" value="ATP_P_PHORIBOSYLTR"/>
    <property type="match status" value="1"/>
</dbReference>
<keyword id="KW-0028">Amino-acid biosynthesis</keyword>
<keyword id="KW-0067">ATP-binding</keyword>
<keyword id="KW-0963">Cytoplasm</keyword>
<keyword id="KW-0328">Glycosyltransferase</keyword>
<keyword id="KW-0368">Histidine biosynthesis</keyword>
<keyword id="KW-0460">Magnesium</keyword>
<keyword id="KW-0479">Metal-binding</keyword>
<keyword id="KW-0547">Nucleotide-binding</keyword>
<keyword id="KW-1185">Reference proteome</keyword>
<keyword id="KW-0808">Transferase</keyword>
<comment type="function">
    <text evidence="1">Catalyzes the condensation of ATP and 5-phosphoribose 1-diphosphate to form N'-(5'-phosphoribosyl)-ATP (PR-ATP). Has a crucial role in the pathway because the rate of histidine biosynthesis seems to be controlled primarily by regulation of HisG enzymatic activity.</text>
</comment>
<comment type="catalytic activity">
    <reaction evidence="1">
        <text>1-(5-phospho-beta-D-ribosyl)-ATP + diphosphate = 5-phospho-alpha-D-ribose 1-diphosphate + ATP</text>
        <dbReference type="Rhea" id="RHEA:18473"/>
        <dbReference type="ChEBI" id="CHEBI:30616"/>
        <dbReference type="ChEBI" id="CHEBI:33019"/>
        <dbReference type="ChEBI" id="CHEBI:58017"/>
        <dbReference type="ChEBI" id="CHEBI:73183"/>
        <dbReference type="EC" id="2.4.2.17"/>
    </reaction>
</comment>
<comment type="cofactor">
    <cofactor evidence="1">
        <name>Mg(2+)</name>
        <dbReference type="ChEBI" id="CHEBI:18420"/>
    </cofactor>
</comment>
<comment type="activity regulation">
    <text evidence="1">Feedback inhibited by histidine.</text>
</comment>
<comment type="pathway">
    <text evidence="1">Amino-acid biosynthesis; L-histidine biosynthesis; L-histidine from 5-phospho-alpha-D-ribose 1-diphosphate: step 1/9.</text>
</comment>
<comment type="subcellular location">
    <subcellularLocation>
        <location evidence="1">Cytoplasm</location>
    </subcellularLocation>
</comment>
<comment type="similarity">
    <text evidence="1">Belongs to the ATP phosphoribosyltransferase family. Long subfamily.</text>
</comment>
<sequence>MRIAVPNKGRLHDPTLSLLERAGLHTEETADRQLYADTVDPDVSILFARAADIPEYVRDGAADVGITGLDQAAESGGVADSASAAGDDDLVDLLDLGYGSCKLVLAAPEDGDISVVADLAGGTVATEFPNITRDYLDRVDVDADVVTVTGATELTPHVDMADAIVDITSTGTTLKVNRLAVIDDVLDSSVRLFARPDMVDDAKVKQVLTAFESVLAADGRRYLMMNAPKERLDEVKDVIPGLGGPTVMDVEADENGNGMVAVHAVVEERDVFATISELKSVGATGILVTKIERLVG</sequence>
<name>HIS1_HALLT</name>
<accession>B9LU14</accession>
<reference key="1">
    <citation type="journal article" date="2016" name="Stand. Genomic Sci.">
        <title>Complete genome sequence of the Antarctic Halorubrum lacusprofundi type strain ACAM 34.</title>
        <authorList>
            <person name="Anderson I.J."/>
            <person name="DasSarma P."/>
            <person name="Lucas S."/>
            <person name="Copeland A."/>
            <person name="Lapidus A."/>
            <person name="Del Rio T.G."/>
            <person name="Tice H."/>
            <person name="Dalin E."/>
            <person name="Bruce D.C."/>
            <person name="Goodwin L."/>
            <person name="Pitluck S."/>
            <person name="Sims D."/>
            <person name="Brettin T.S."/>
            <person name="Detter J.C."/>
            <person name="Han C.S."/>
            <person name="Larimer F."/>
            <person name="Hauser L."/>
            <person name="Land M."/>
            <person name="Ivanova N."/>
            <person name="Richardson P."/>
            <person name="Cavicchioli R."/>
            <person name="DasSarma S."/>
            <person name="Woese C.R."/>
            <person name="Kyrpides N.C."/>
        </authorList>
    </citation>
    <scope>NUCLEOTIDE SEQUENCE [LARGE SCALE GENOMIC DNA]</scope>
    <source>
        <strain>ATCC 49239 / DSM 5036 / JCM 8891 / ACAM 34</strain>
    </source>
</reference>
<feature type="chain" id="PRO_1000118254" description="ATP phosphoribosyltransferase">
    <location>
        <begin position="1"/>
        <end position="296"/>
    </location>
</feature>
<organism>
    <name type="scientific">Halorubrum lacusprofundi (strain ATCC 49239 / DSM 5036 / JCM 8891 / ACAM 34)</name>
    <dbReference type="NCBI Taxonomy" id="416348"/>
    <lineage>
        <taxon>Archaea</taxon>
        <taxon>Methanobacteriati</taxon>
        <taxon>Methanobacteriota</taxon>
        <taxon>Stenosarchaea group</taxon>
        <taxon>Halobacteria</taxon>
        <taxon>Halobacteriales</taxon>
        <taxon>Haloferacaceae</taxon>
        <taxon>Halorubrum</taxon>
    </lineage>
</organism>